<reference key="1">
    <citation type="journal article" date="2002" name="DNA Res.">
        <title>Complete genomic sequence of nitrogen-fixing symbiotic bacterium Bradyrhizobium japonicum USDA110.</title>
        <authorList>
            <person name="Kaneko T."/>
            <person name="Nakamura Y."/>
            <person name="Sato S."/>
            <person name="Minamisawa K."/>
            <person name="Uchiumi T."/>
            <person name="Sasamoto S."/>
            <person name="Watanabe A."/>
            <person name="Idesawa K."/>
            <person name="Iriguchi M."/>
            <person name="Kawashima K."/>
            <person name="Kohara M."/>
            <person name="Matsumoto M."/>
            <person name="Shimpo S."/>
            <person name="Tsuruoka H."/>
            <person name="Wada T."/>
            <person name="Yamada M."/>
            <person name="Tabata S."/>
        </authorList>
    </citation>
    <scope>NUCLEOTIDE SEQUENCE [LARGE SCALE GENOMIC DNA]</scope>
    <source>
        <strain>JCM 10833 / BCRC 13528 / IAM 13628 / NBRC 14792 / USDA 110</strain>
    </source>
</reference>
<reference key="2">
    <citation type="journal article" date="2004" name="Arch. Microbiol.">
        <title>Use of Tn KPK2 for sequencing a 10.6-kb PstI DNA fragment of Bradyrhizobium japonicum and for the construction of aspA and ndvA mutants.</title>
        <authorList>
            <person name="Wiedemann G."/>
            <person name="Mueller P."/>
        </authorList>
    </citation>
    <scope>NUCLEOTIDE SEQUENCE [GENOMIC DNA] OF 1-598</scope>
    <source>
        <strain>USDA 110spc4</strain>
    </source>
</reference>
<evidence type="ECO:0000250" key="1"/>
<evidence type="ECO:0000255" key="2">
    <source>
        <dbReference type="HAMAP-Rule" id="MF_01728"/>
    </source>
</evidence>
<proteinExistence type="inferred from homology"/>
<organism>
    <name type="scientific">Bradyrhizobium diazoefficiens (strain JCM 10833 / BCRC 13528 / IAM 13628 / NBRC 14792 / USDA 110)</name>
    <dbReference type="NCBI Taxonomy" id="224911"/>
    <lineage>
        <taxon>Bacteria</taxon>
        <taxon>Pseudomonadati</taxon>
        <taxon>Pseudomonadota</taxon>
        <taxon>Alphaproteobacteria</taxon>
        <taxon>Hyphomicrobiales</taxon>
        <taxon>Nitrobacteraceae</taxon>
        <taxon>Bradyrhizobium</taxon>
    </lineage>
</organism>
<dbReference type="EC" id="7.5.2.3" evidence="2"/>
<dbReference type="EMBL" id="BA000040">
    <property type="protein sequence ID" value="BAC46586.1"/>
    <property type="molecule type" value="Genomic_DNA"/>
</dbReference>
<dbReference type="EMBL" id="AY046315">
    <property type="protein sequence ID" value="AAL02317.3"/>
    <property type="molecule type" value="Genomic_DNA"/>
</dbReference>
<dbReference type="RefSeq" id="NP_767961.1">
    <property type="nucleotide sequence ID" value="NC_004463.1"/>
</dbReference>
<dbReference type="RefSeq" id="WP_011084139.1">
    <property type="nucleotide sequence ID" value="NC_004463.1"/>
</dbReference>
<dbReference type="SMR" id="Q89UT8"/>
<dbReference type="STRING" id="224911.AAV28_03495"/>
<dbReference type="EnsemblBacteria" id="BAC46586">
    <property type="protein sequence ID" value="BAC46586"/>
    <property type="gene ID" value="BAC46586"/>
</dbReference>
<dbReference type="GeneID" id="46488589"/>
<dbReference type="KEGG" id="bja:bll1321"/>
<dbReference type="PATRIC" id="fig|224911.44.peg.736"/>
<dbReference type="eggNOG" id="COG1132">
    <property type="taxonomic scope" value="Bacteria"/>
</dbReference>
<dbReference type="HOGENOM" id="CLU_000604_84_3_5"/>
<dbReference type="InParanoid" id="Q89UT8"/>
<dbReference type="OrthoDB" id="9804259at2"/>
<dbReference type="PhylomeDB" id="Q89UT8"/>
<dbReference type="Proteomes" id="UP000002526">
    <property type="component" value="Chromosome"/>
</dbReference>
<dbReference type="GO" id="GO:0005886">
    <property type="term" value="C:plasma membrane"/>
    <property type="evidence" value="ECO:0007669"/>
    <property type="project" value="UniProtKB-SubCell"/>
</dbReference>
<dbReference type="GO" id="GO:0015441">
    <property type="term" value="F:ABC-type beta-glucan transporter activity"/>
    <property type="evidence" value="ECO:0007669"/>
    <property type="project" value="UniProtKB-EC"/>
</dbReference>
<dbReference type="GO" id="GO:0005524">
    <property type="term" value="F:ATP binding"/>
    <property type="evidence" value="ECO:0007669"/>
    <property type="project" value="UniProtKB-KW"/>
</dbReference>
<dbReference type="GO" id="GO:0016887">
    <property type="term" value="F:ATP hydrolysis activity"/>
    <property type="evidence" value="ECO:0007669"/>
    <property type="project" value="InterPro"/>
</dbReference>
<dbReference type="GO" id="GO:0034040">
    <property type="term" value="F:ATPase-coupled lipid transmembrane transporter activity"/>
    <property type="evidence" value="ECO:0000318"/>
    <property type="project" value="GO_Central"/>
</dbReference>
<dbReference type="GO" id="GO:0055085">
    <property type="term" value="P:transmembrane transport"/>
    <property type="evidence" value="ECO:0000318"/>
    <property type="project" value="GO_Central"/>
</dbReference>
<dbReference type="CDD" id="cd18562">
    <property type="entry name" value="ABC_6TM_NdvA_beta-glucan_exporter_like"/>
    <property type="match status" value="1"/>
</dbReference>
<dbReference type="FunFam" id="3.40.50.300:FF:000221">
    <property type="entry name" value="Multidrug ABC transporter ATP-binding protein"/>
    <property type="match status" value="1"/>
</dbReference>
<dbReference type="Gene3D" id="1.20.1560.10">
    <property type="entry name" value="ABC transporter type 1, transmembrane domain"/>
    <property type="match status" value="1"/>
</dbReference>
<dbReference type="Gene3D" id="3.40.50.300">
    <property type="entry name" value="P-loop containing nucleotide triphosphate hydrolases"/>
    <property type="match status" value="1"/>
</dbReference>
<dbReference type="InterPro" id="IPR003593">
    <property type="entry name" value="AAA+_ATPase"/>
</dbReference>
<dbReference type="InterPro" id="IPR011527">
    <property type="entry name" value="ABC1_TM_dom"/>
</dbReference>
<dbReference type="InterPro" id="IPR036640">
    <property type="entry name" value="ABC1_TM_sf"/>
</dbReference>
<dbReference type="InterPro" id="IPR003439">
    <property type="entry name" value="ABC_transporter-like_ATP-bd"/>
</dbReference>
<dbReference type="InterPro" id="IPR017871">
    <property type="entry name" value="ABC_transporter-like_CS"/>
</dbReference>
<dbReference type="InterPro" id="IPR005896">
    <property type="entry name" value="NdvA"/>
</dbReference>
<dbReference type="InterPro" id="IPR027417">
    <property type="entry name" value="P-loop_NTPase"/>
</dbReference>
<dbReference type="InterPro" id="IPR039421">
    <property type="entry name" value="Type_1_exporter"/>
</dbReference>
<dbReference type="NCBIfam" id="TIGR01192">
    <property type="entry name" value="chvA"/>
    <property type="match status" value="1"/>
</dbReference>
<dbReference type="NCBIfam" id="NF010178">
    <property type="entry name" value="PRK13657.1"/>
    <property type="match status" value="1"/>
</dbReference>
<dbReference type="PANTHER" id="PTHR43394:SF1">
    <property type="entry name" value="ATP-BINDING CASSETTE SUB-FAMILY B MEMBER 10, MITOCHONDRIAL"/>
    <property type="match status" value="1"/>
</dbReference>
<dbReference type="PANTHER" id="PTHR43394">
    <property type="entry name" value="ATP-DEPENDENT PERMEASE MDL1, MITOCHONDRIAL"/>
    <property type="match status" value="1"/>
</dbReference>
<dbReference type="Pfam" id="PF00664">
    <property type="entry name" value="ABC_membrane"/>
    <property type="match status" value="1"/>
</dbReference>
<dbReference type="Pfam" id="PF00005">
    <property type="entry name" value="ABC_tran"/>
    <property type="match status" value="1"/>
</dbReference>
<dbReference type="SMART" id="SM00382">
    <property type="entry name" value="AAA"/>
    <property type="match status" value="1"/>
</dbReference>
<dbReference type="SUPFAM" id="SSF90123">
    <property type="entry name" value="ABC transporter transmembrane region"/>
    <property type="match status" value="1"/>
</dbReference>
<dbReference type="SUPFAM" id="SSF52540">
    <property type="entry name" value="P-loop containing nucleoside triphosphate hydrolases"/>
    <property type="match status" value="1"/>
</dbReference>
<dbReference type="PROSITE" id="PS50929">
    <property type="entry name" value="ABC_TM1F"/>
    <property type="match status" value="1"/>
</dbReference>
<dbReference type="PROSITE" id="PS00211">
    <property type="entry name" value="ABC_TRANSPORTER_1"/>
    <property type="match status" value="1"/>
</dbReference>
<dbReference type="PROSITE" id="PS50893">
    <property type="entry name" value="ABC_TRANSPORTER_2"/>
    <property type="match status" value="1"/>
</dbReference>
<dbReference type="PROSITE" id="PS51317">
    <property type="entry name" value="NDVA"/>
    <property type="match status" value="1"/>
</dbReference>
<feature type="chain" id="PRO_0000290243" description="Beta-(1--&gt;2)glucan export ATP-binding/permease protein NdvA">
    <location>
        <begin position="1"/>
        <end position="602"/>
    </location>
</feature>
<feature type="transmembrane region" description="Helical" evidence="2">
    <location>
        <begin position="22"/>
        <end position="42"/>
    </location>
</feature>
<feature type="transmembrane region" description="Helical" evidence="2">
    <location>
        <begin position="63"/>
        <end position="83"/>
    </location>
</feature>
<feature type="transmembrane region" description="Helical" evidence="2">
    <location>
        <begin position="141"/>
        <end position="161"/>
    </location>
</feature>
<feature type="transmembrane region" description="Helical" evidence="2">
    <location>
        <begin position="163"/>
        <end position="183"/>
    </location>
</feature>
<feature type="transmembrane region" description="Helical" evidence="2">
    <location>
        <begin position="240"/>
        <end position="262"/>
    </location>
</feature>
<feature type="transmembrane region" description="Helical" evidence="2">
    <location>
        <begin position="280"/>
        <end position="300"/>
    </location>
</feature>
<feature type="domain" description="ABC transmembrane type-1" evidence="2">
    <location>
        <begin position="21"/>
        <end position="306"/>
    </location>
</feature>
<feature type="domain" description="ABC transporter" evidence="2">
    <location>
        <begin position="340"/>
        <end position="573"/>
    </location>
</feature>
<feature type="binding site" evidence="2">
    <location>
        <begin position="373"/>
        <end position="380"/>
    </location>
    <ligand>
        <name>ATP</name>
        <dbReference type="ChEBI" id="CHEBI:30616"/>
    </ligand>
</feature>
<comment type="function">
    <text evidence="1">Involved in beta-(1--&gt;2)glucan export. Transmembrane domains (TMD) form a pore in the inner membrane and the ATP-binding domain (NBD) is responsible for energy generation (By similarity).</text>
</comment>
<comment type="catalytic activity">
    <reaction evidence="2">
        <text>[(1-&gt;2)-beta-D-glucosyl](n)(in) + ATP + H2O = [(1-&gt;2)-beta-D-glucosyl](n)(out) + ADP + phosphate + H(+)</text>
        <dbReference type="Rhea" id="RHEA:18453"/>
        <dbReference type="Rhea" id="RHEA-COMP:11881"/>
        <dbReference type="ChEBI" id="CHEBI:15377"/>
        <dbReference type="ChEBI" id="CHEBI:15378"/>
        <dbReference type="ChEBI" id="CHEBI:27517"/>
        <dbReference type="ChEBI" id="CHEBI:30616"/>
        <dbReference type="ChEBI" id="CHEBI:43474"/>
        <dbReference type="ChEBI" id="CHEBI:456216"/>
        <dbReference type="EC" id="7.5.2.3"/>
    </reaction>
</comment>
<comment type="subunit">
    <text evidence="2">Homodimer.</text>
</comment>
<comment type="subcellular location">
    <subcellularLocation>
        <location evidence="2">Cell inner membrane</location>
        <topology evidence="2">Multi-pass membrane protein</topology>
    </subcellularLocation>
</comment>
<comment type="domain">
    <text>In NdvA the ATP-binding domain (NBD) and the transmembrane domain (TMD) are fused.</text>
</comment>
<comment type="similarity">
    <text evidence="2">Belongs to the ABC transporter superfamily. Beta-(1--&gt;2)glucan exporter (TC 3.A.1.108.1) family.</text>
</comment>
<keyword id="KW-0067">ATP-binding</keyword>
<keyword id="KW-0997">Cell inner membrane</keyword>
<keyword id="KW-1003">Cell membrane</keyword>
<keyword id="KW-0472">Membrane</keyword>
<keyword id="KW-0547">Nucleotide-binding</keyword>
<keyword id="KW-1185">Reference proteome</keyword>
<keyword id="KW-0762">Sugar transport</keyword>
<keyword id="KW-1278">Translocase</keyword>
<keyword id="KW-0812">Transmembrane</keyword>
<keyword id="KW-1133">Transmembrane helix</keyword>
<keyword id="KW-0813">Transport</keyword>
<sequence>MSIFSLYTRVLELLGKEARLGWLLAFANLLLAASQFAEPVLFGRIVDVLSGKSVAGSSSAWPFLAAWVAFGLFTIACSALVALQADRLSHRQRQAVLTDYFEHILQLPLTFHSGTHSGRLMKVMLNGTDALWRLWLGFFREHFAAILSVVVLLPLSLYLNWRLAILLFVLCIVFTALTTFVVRRTFGMQMAVEEHYSELSARASDALGNVALVQSFVRVESEVQGLRSVANQLLEAQMPVLSWWALVTVITRASTTITVLAIFTLGIALHDQGLTSVGEIVMFVSFATLLIQKLEQVVSFINNVFMEAPRLREFFNVLDAVPAVHDRPDAIDAGRLSGLVEFNDVTFSYDGKRPAVEDLSFTALPGQTVALVGPTGAGKSTAIALLHRAFDPQSGFIRIDGMDVRGVTLTSLRRNIGVVFQEALLFNRSIAENLRVGKPDATEAEMRKAAERAQALEFIERSGGFETNAGERGRMLSGGERQRLSIARALLKDPPILILDEATSALDAVTEVKVNAALDEVMRGRTTFVIAHRLATIRNATRILVFENGRVTESGTFDELVAKGGHFAELARAQFMVQEQSRANTRASVTAAETIATAAKSP</sequence>
<name>NDVA_BRADU</name>
<accession>Q89UT8</accession>
<accession>Q938W1</accession>
<gene>
    <name evidence="2" type="primary">ndvA</name>
    <name type="ordered locus">bll1321</name>
</gene>
<protein>
    <recommendedName>
        <fullName evidence="2">Beta-(1--&gt;2)glucan export ATP-binding/permease protein NdvA</fullName>
        <ecNumber evidence="2">7.5.2.3</ecNumber>
    </recommendedName>
</protein>